<comment type="function">
    <text evidence="1">May be involved in several stages of intracellular trafficking.</text>
</comment>
<comment type="interaction">
    <interactant intactId="EBI-727113">
        <id>Q9Y343</id>
    </interactant>
    <interactant intactId="EBI-11526590">
        <id>P14859-6</id>
        <label>POU2F1</label>
    </interactant>
    <organismsDiffer>false</organismsDiffer>
    <experiments>3</experiments>
</comment>
<comment type="subcellular location">
    <subcellularLocation>
        <location evidence="1">Cytoplasmic vesicle membrane</location>
        <topology evidence="1">Peripheral membrane protein</topology>
        <orientation evidence="1">Cytoplasmic side</orientation>
    </subcellularLocation>
</comment>
<comment type="alternative products">
    <event type="alternative splicing"/>
    <isoform>
        <id>Q9Y343-1</id>
        <name>1</name>
        <sequence type="displayed"/>
    </isoform>
    <isoform>
        <id>Q9Y343-2</id>
        <name>2</name>
        <sequence type="described" ref="VSP_012034"/>
    </isoform>
</comment>
<comment type="domain">
    <text evidence="1">The PX domain mediates specific binding to membranes enriched in phosphatidylinositol 3-phosphate (PtdIns(P3)).</text>
</comment>
<comment type="similarity">
    <text evidence="6">Belongs to the sorting nexin family.</text>
</comment>
<gene>
    <name type="primary">SNX24</name>
    <name type="ORF">SBBI31</name>
    <name type="ORF">UNQ654/PRO1284</name>
</gene>
<proteinExistence type="evidence at protein level"/>
<reference key="1">
    <citation type="submission" date="1999-03" db="EMBL/GenBank/DDBJ databases">
        <title>Hypothetical human protein SBBI31.</title>
        <authorList>
            <person name="Zhang W."/>
            <person name="Wan T."/>
            <person name="Cao X."/>
        </authorList>
    </citation>
    <scope>NUCLEOTIDE SEQUENCE [MRNA] (ISOFORM 1)</scope>
</reference>
<reference key="2">
    <citation type="submission" date="2001-07" db="EMBL/GenBank/DDBJ databases">
        <title>SBBI31 as a new member (SNX24) of the sorting nexin family.</title>
        <authorList>
            <person name="Hong W."/>
        </authorList>
    </citation>
    <scope>NUCLEOTIDE SEQUENCE [MRNA] (ISOFORM 1)</scope>
</reference>
<reference key="3">
    <citation type="journal article" date="2003" name="Genome Res.">
        <title>The secreted protein discovery initiative (SPDI), a large-scale effort to identify novel human secreted and transmembrane proteins: a bioinformatics assessment.</title>
        <authorList>
            <person name="Clark H.F."/>
            <person name="Gurney A.L."/>
            <person name="Abaya E."/>
            <person name="Baker K."/>
            <person name="Baldwin D.T."/>
            <person name="Brush J."/>
            <person name="Chen J."/>
            <person name="Chow B."/>
            <person name="Chui C."/>
            <person name="Crowley C."/>
            <person name="Currell B."/>
            <person name="Deuel B."/>
            <person name="Dowd P."/>
            <person name="Eaton D."/>
            <person name="Foster J.S."/>
            <person name="Grimaldi C."/>
            <person name="Gu Q."/>
            <person name="Hass P.E."/>
            <person name="Heldens S."/>
            <person name="Huang A."/>
            <person name="Kim H.S."/>
            <person name="Klimowski L."/>
            <person name="Jin Y."/>
            <person name="Johnson S."/>
            <person name="Lee J."/>
            <person name="Lewis L."/>
            <person name="Liao D."/>
            <person name="Mark M.R."/>
            <person name="Robbie E."/>
            <person name="Sanchez C."/>
            <person name="Schoenfeld J."/>
            <person name="Seshagiri S."/>
            <person name="Simmons L."/>
            <person name="Singh J."/>
            <person name="Smith V."/>
            <person name="Stinson J."/>
            <person name="Vagts A."/>
            <person name="Vandlen R.L."/>
            <person name="Watanabe C."/>
            <person name="Wieand D."/>
            <person name="Woods K."/>
            <person name="Xie M.-H."/>
            <person name="Yansura D.G."/>
            <person name="Yi S."/>
            <person name="Yu G."/>
            <person name="Yuan J."/>
            <person name="Zhang M."/>
            <person name="Zhang Z."/>
            <person name="Goddard A.D."/>
            <person name="Wood W.I."/>
            <person name="Godowski P.J."/>
            <person name="Gray A.M."/>
        </authorList>
    </citation>
    <scope>NUCLEOTIDE SEQUENCE [LARGE SCALE MRNA] (ISOFORM 2)</scope>
</reference>
<reference key="4">
    <citation type="journal article" date="2004" name="Genome Res.">
        <title>The status, quality, and expansion of the NIH full-length cDNA project: the Mammalian Gene Collection (MGC).</title>
        <authorList>
            <consortium name="The MGC Project Team"/>
        </authorList>
    </citation>
    <scope>NUCLEOTIDE SEQUENCE [LARGE SCALE MRNA] (ISOFORMS 1 AND 2)</scope>
    <source>
        <tissue>Kidney</tissue>
        <tissue>Lung</tissue>
    </source>
</reference>
<reference key="5">
    <citation type="journal article" date="2009" name="Anal. Chem.">
        <title>Lys-N and trypsin cover complementary parts of the phosphoproteome in a refined SCX-based approach.</title>
        <authorList>
            <person name="Gauci S."/>
            <person name="Helbig A.O."/>
            <person name="Slijper M."/>
            <person name="Krijgsveld J."/>
            <person name="Heck A.J."/>
            <person name="Mohammed S."/>
        </authorList>
    </citation>
    <scope>IDENTIFICATION BY MASS SPECTROMETRY [LARGE SCALE ANALYSIS]</scope>
</reference>
<reference key="6">
    <citation type="journal article" date="2012" name="Proc. Natl. Acad. Sci. U.S.A.">
        <title>N-terminal acetylome analyses and functional insights of the N-terminal acetyltransferase NatB.</title>
        <authorList>
            <person name="Van Damme P."/>
            <person name="Lasa M."/>
            <person name="Polevoda B."/>
            <person name="Gazquez C."/>
            <person name="Elosegui-Artola A."/>
            <person name="Kim D.S."/>
            <person name="De Juan-Pardo E."/>
            <person name="Demeyer K."/>
            <person name="Hole K."/>
            <person name="Larrea E."/>
            <person name="Timmerman E."/>
            <person name="Prieto J."/>
            <person name="Arnesen T."/>
            <person name="Sherman F."/>
            <person name="Gevaert K."/>
            <person name="Aldabe R."/>
        </authorList>
    </citation>
    <scope>ACETYLATION [LARGE SCALE ANALYSIS] AT MET-1</scope>
    <scope>IDENTIFICATION BY MASS SPECTROMETRY [LARGE SCALE ANALYSIS]</scope>
</reference>
<protein>
    <recommendedName>
        <fullName>Sorting nexin-24</fullName>
    </recommendedName>
</protein>
<sequence>MEVYIPSFRYEESDLERGYTVFKIEVLMNGRKHFVEKRYSEFHALHKKLKKCIKTPEIPSKHVRNWVPKVLEQRRQGLETYLQAVILENEELPKLFLDFLNVRHLPSLPKAESCGSFDETESEESSKLSHQPVLLFLRDPYVLPAASDFPNVVIEGVLHGIFYPHLQPR</sequence>
<feature type="chain" id="PRO_0000213872" description="Sorting nexin-24">
    <location>
        <begin position="1"/>
        <end position="169"/>
    </location>
</feature>
<feature type="domain" description="PX" evidence="3">
    <location>
        <begin position="1"/>
        <end position="125"/>
    </location>
</feature>
<feature type="binding site" evidence="1">
    <location>
        <position position="38"/>
    </location>
    <ligand>
        <name>a 1,2-diacyl-sn-glycero-3-phospho-(1D-myo-inositol-3-phosphate)</name>
        <dbReference type="ChEBI" id="CHEBI:58088"/>
    </ligand>
</feature>
<feature type="binding site" evidence="1">
    <location>
        <position position="40"/>
    </location>
    <ligand>
        <name>a 1,2-diacyl-sn-glycero-3-phospho-(1D-myo-inositol-3-phosphate)</name>
        <dbReference type="ChEBI" id="CHEBI:58088"/>
    </ligand>
</feature>
<feature type="binding site" evidence="1">
    <location>
        <position position="61"/>
    </location>
    <ligand>
        <name>a 1,2-diacyl-sn-glycero-3-phospho-(1D-myo-inositol-3-phosphate)</name>
        <dbReference type="ChEBI" id="CHEBI:58088"/>
    </ligand>
</feature>
<feature type="binding site" evidence="1">
    <location>
        <position position="74"/>
    </location>
    <ligand>
        <name>a 1,2-diacyl-sn-glycero-3-phospho-(1D-myo-inositol-3-phosphate)</name>
        <dbReference type="ChEBI" id="CHEBI:58088"/>
    </ligand>
</feature>
<feature type="modified residue" description="N-acetylmethionine" evidence="7">
    <location>
        <position position="1"/>
    </location>
</feature>
<feature type="modified residue" description="Phosphoserine" evidence="2">
    <location>
        <position position="113"/>
    </location>
</feature>
<feature type="modified residue" description="Phosphoserine" evidence="2">
    <location>
        <position position="116"/>
    </location>
</feature>
<feature type="splice variant" id="VSP_012034" description="In isoform 2." evidence="4 5">
    <original>DFPNVVIEGVLHGIFYPHLQPR</original>
    <variation>GNQTCHLLTALY</variation>
    <location>
        <begin position="148"/>
        <end position="169"/>
    </location>
</feature>
<feature type="strand" evidence="8">
    <location>
        <begin position="2"/>
        <end position="11"/>
    </location>
</feature>
<feature type="strand" evidence="8">
    <location>
        <begin position="19"/>
        <end position="28"/>
    </location>
</feature>
<feature type="strand" evidence="8">
    <location>
        <begin position="31"/>
        <end position="38"/>
    </location>
</feature>
<feature type="helix" evidence="8">
    <location>
        <begin position="39"/>
        <end position="49"/>
    </location>
</feature>
<feature type="turn" evidence="8">
    <location>
        <begin position="50"/>
        <end position="52"/>
    </location>
</feature>
<feature type="helix" evidence="8">
    <location>
        <begin position="68"/>
        <end position="88"/>
    </location>
</feature>
<feature type="helix" evidence="8">
    <location>
        <begin position="94"/>
        <end position="99"/>
    </location>
</feature>
<keyword id="KW-0002">3D-structure</keyword>
<keyword id="KW-0007">Acetylation</keyword>
<keyword id="KW-0025">Alternative splicing</keyword>
<keyword id="KW-0968">Cytoplasmic vesicle</keyword>
<keyword id="KW-0446">Lipid-binding</keyword>
<keyword id="KW-0472">Membrane</keyword>
<keyword id="KW-0597">Phosphoprotein</keyword>
<keyword id="KW-0653">Protein transport</keyword>
<keyword id="KW-1267">Proteomics identification</keyword>
<keyword id="KW-1185">Reference proteome</keyword>
<keyword id="KW-0813">Transport</keyword>
<name>SNX24_HUMAN</name>
<accession>Q9Y343</accession>
<accession>Q6UY33</accession>
<dbReference type="EMBL" id="AF139461">
    <property type="protein sequence ID" value="AAD32668.1"/>
    <property type="molecule type" value="mRNA"/>
</dbReference>
<dbReference type="EMBL" id="AY044655">
    <property type="protein sequence ID" value="AAK98769.1"/>
    <property type="molecule type" value="mRNA"/>
</dbReference>
<dbReference type="EMBL" id="AY358098">
    <property type="protein sequence ID" value="AAQ88465.1"/>
    <property type="molecule type" value="mRNA"/>
</dbReference>
<dbReference type="EMBL" id="BC069012">
    <property type="protein sequence ID" value="AAH69012.1"/>
    <property type="molecule type" value="mRNA"/>
</dbReference>
<dbReference type="EMBL" id="BC010886">
    <property type="protein sequence ID" value="AAH10886.1"/>
    <property type="molecule type" value="mRNA"/>
</dbReference>
<dbReference type="CCDS" id="CCDS4132.1">
    <molecule id="Q9Y343-1"/>
</dbReference>
<dbReference type="RefSeq" id="NP_054754.1">
    <molecule id="Q9Y343-1"/>
    <property type="nucleotide sequence ID" value="NM_014035.4"/>
</dbReference>
<dbReference type="PDB" id="4AZ9">
    <property type="method" value="X-ray"/>
    <property type="resolution" value="1.75 A"/>
    <property type="chains" value="A/B=1-107"/>
</dbReference>
<dbReference type="PDB" id="8TBV">
    <property type="method" value="X-ray"/>
    <property type="resolution" value="2.64 A"/>
    <property type="chains" value="C/F=127-135"/>
</dbReference>
<dbReference type="PDB" id="8TBW">
    <property type="method" value="X-ray"/>
    <property type="resolution" value="2.08 A"/>
    <property type="chains" value="C/F=127-135"/>
</dbReference>
<dbReference type="PDB" id="8U9G">
    <property type="method" value="X-ray"/>
    <property type="resolution" value="2.87 A"/>
    <property type="chains" value="C/F=127-135"/>
</dbReference>
<dbReference type="PDBsum" id="4AZ9"/>
<dbReference type="PDBsum" id="8TBV"/>
<dbReference type="PDBsum" id="8TBW"/>
<dbReference type="PDBsum" id="8U9G"/>
<dbReference type="SMR" id="Q9Y343"/>
<dbReference type="BioGRID" id="118791">
    <property type="interactions" value="35"/>
</dbReference>
<dbReference type="FunCoup" id="Q9Y343">
    <property type="interactions" value="282"/>
</dbReference>
<dbReference type="IntAct" id="Q9Y343">
    <property type="interactions" value="28"/>
</dbReference>
<dbReference type="MINT" id="Q9Y343"/>
<dbReference type="STRING" id="9606.ENSP00000261369"/>
<dbReference type="TCDB" id="3.A.34.1.1">
    <property type="family name" value="the sorting nexins of the escrt complexes (sn-escrt)"/>
</dbReference>
<dbReference type="iPTMnet" id="Q9Y343"/>
<dbReference type="PhosphoSitePlus" id="Q9Y343"/>
<dbReference type="BioMuta" id="SNX24"/>
<dbReference type="DMDM" id="20140349"/>
<dbReference type="jPOST" id="Q9Y343"/>
<dbReference type="MassIVE" id="Q9Y343"/>
<dbReference type="PaxDb" id="9606-ENSP00000261369"/>
<dbReference type="PeptideAtlas" id="Q9Y343"/>
<dbReference type="ProteomicsDB" id="85973">
    <molecule id="Q9Y343-1"/>
</dbReference>
<dbReference type="ProteomicsDB" id="85974">
    <molecule id="Q9Y343-2"/>
</dbReference>
<dbReference type="Pumba" id="Q9Y343"/>
<dbReference type="Antibodypedia" id="25654">
    <property type="antibodies" value="166 antibodies from 22 providers"/>
</dbReference>
<dbReference type="DNASU" id="28966"/>
<dbReference type="Ensembl" id="ENST00000261369.9">
    <molecule id="Q9Y343-1"/>
    <property type="protein sequence ID" value="ENSP00000261369.4"/>
    <property type="gene ID" value="ENSG00000064652.11"/>
</dbReference>
<dbReference type="Ensembl" id="ENST00000506996.5">
    <molecule id="Q9Y343-2"/>
    <property type="protein sequence ID" value="ENSP00000422535.1"/>
    <property type="gene ID" value="ENSG00000064652.11"/>
</dbReference>
<dbReference type="Ensembl" id="ENST00000513881.5">
    <molecule id="Q9Y343-2"/>
    <property type="protein sequence ID" value="ENSP00000424149.1"/>
    <property type="gene ID" value="ENSG00000064652.11"/>
</dbReference>
<dbReference type="GeneID" id="28966"/>
<dbReference type="KEGG" id="hsa:28966"/>
<dbReference type="MANE-Select" id="ENST00000261369.9">
    <property type="protein sequence ID" value="ENSP00000261369.4"/>
    <property type="RefSeq nucleotide sequence ID" value="NM_014035.4"/>
    <property type="RefSeq protein sequence ID" value="NP_054754.1"/>
</dbReference>
<dbReference type="UCSC" id="uc003ktf.3">
    <molecule id="Q9Y343-1"/>
    <property type="organism name" value="human"/>
</dbReference>
<dbReference type="AGR" id="HGNC:21533"/>
<dbReference type="CTD" id="28966"/>
<dbReference type="DisGeNET" id="28966"/>
<dbReference type="GeneCards" id="SNX24"/>
<dbReference type="HGNC" id="HGNC:21533">
    <property type="gene designation" value="SNX24"/>
</dbReference>
<dbReference type="HPA" id="ENSG00000064652">
    <property type="expression patterns" value="Low tissue specificity"/>
</dbReference>
<dbReference type="neXtProt" id="NX_Q9Y343"/>
<dbReference type="OpenTargets" id="ENSG00000064652"/>
<dbReference type="PharmGKB" id="PA134980773"/>
<dbReference type="VEuPathDB" id="HostDB:ENSG00000064652"/>
<dbReference type="eggNOG" id="KOG2101">
    <property type="taxonomic scope" value="Eukaryota"/>
</dbReference>
<dbReference type="GeneTree" id="ENSGT00390000001280"/>
<dbReference type="HOGENOM" id="CLU_117250_1_0_1"/>
<dbReference type="InParanoid" id="Q9Y343"/>
<dbReference type="OMA" id="RYSTFHA"/>
<dbReference type="OrthoDB" id="93876at2759"/>
<dbReference type="PAN-GO" id="Q9Y343">
    <property type="GO annotations" value="1 GO annotation based on evolutionary models"/>
</dbReference>
<dbReference type="PhylomeDB" id="Q9Y343"/>
<dbReference type="TreeFam" id="TF332414"/>
<dbReference type="PathwayCommons" id="Q9Y343"/>
<dbReference type="SignaLink" id="Q9Y343"/>
<dbReference type="BioGRID-ORCS" id="28966">
    <property type="hits" value="8 hits in 1164 CRISPR screens"/>
</dbReference>
<dbReference type="ChiTaRS" id="SNX24">
    <property type="organism name" value="human"/>
</dbReference>
<dbReference type="EvolutionaryTrace" id="Q9Y343"/>
<dbReference type="GenomeRNAi" id="28966"/>
<dbReference type="Pharos" id="Q9Y343">
    <property type="development level" value="Tbio"/>
</dbReference>
<dbReference type="PRO" id="PR:Q9Y343"/>
<dbReference type="Proteomes" id="UP000005640">
    <property type="component" value="Chromosome 5"/>
</dbReference>
<dbReference type="RNAct" id="Q9Y343">
    <property type="molecule type" value="protein"/>
</dbReference>
<dbReference type="Bgee" id="ENSG00000064652">
    <property type="expression patterns" value="Expressed in oocyte and 190 other cell types or tissues"/>
</dbReference>
<dbReference type="ExpressionAtlas" id="Q9Y343">
    <property type="expression patterns" value="baseline and differential"/>
</dbReference>
<dbReference type="GO" id="GO:0030659">
    <property type="term" value="C:cytoplasmic vesicle membrane"/>
    <property type="evidence" value="ECO:0007669"/>
    <property type="project" value="UniProtKB-SubCell"/>
</dbReference>
<dbReference type="GO" id="GO:1901981">
    <property type="term" value="F:phosphatidylinositol phosphate binding"/>
    <property type="evidence" value="ECO:0000318"/>
    <property type="project" value="GO_Central"/>
</dbReference>
<dbReference type="GO" id="GO:0032266">
    <property type="term" value="F:phosphatidylinositol-3-phosphate binding"/>
    <property type="evidence" value="ECO:0007669"/>
    <property type="project" value="Ensembl"/>
</dbReference>
<dbReference type="GO" id="GO:0070273">
    <property type="term" value="F:phosphatidylinositol-4-phosphate binding"/>
    <property type="evidence" value="ECO:0007669"/>
    <property type="project" value="Ensembl"/>
</dbReference>
<dbReference type="GO" id="GO:0010314">
    <property type="term" value="F:phosphatidylinositol-5-phosphate binding"/>
    <property type="evidence" value="ECO:0007669"/>
    <property type="project" value="Ensembl"/>
</dbReference>
<dbReference type="GO" id="GO:0015031">
    <property type="term" value="P:protein transport"/>
    <property type="evidence" value="ECO:0007669"/>
    <property type="project" value="UniProtKB-KW"/>
</dbReference>
<dbReference type="CDD" id="cd06880">
    <property type="entry name" value="PX_SNX22"/>
    <property type="match status" value="1"/>
</dbReference>
<dbReference type="FunFam" id="3.30.1520.10:FF:000038">
    <property type="entry name" value="sorting nexin-24"/>
    <property type="match status" value="1"/>
</dbReference>
<dbReference type="Gene3D" id="3.30.1520.10">
    <property type="entry name" value="Phox-like domain"/>
    <property type="match status" value="1"/>
</dbReference>
<dbReference type="InterPro" id="IPR001683">
    <property type="entry name" value="PX_dom"/>
</dbReference>
<dbReference type="InterPro" id="IPR036871">
    <property type="entry name" value="PX_dom_sf"/>
</dbReference>
<dbReference type="InterPro" id="IPR052467">
    <property type="entry name" value="Sorting_nexin_PX-domain"/>
</dbReference>
<dbReference type="PANTHER" id="PTHR15813">
    <property type="entry name" value="SORTING NEXIN-22 AND 24"/>
    <property type="match status" value="1"/>
</dbReference>
<dbReference type="PANTHER" id="PTHR15813:SF10">
    <property type="entry name" value="SORTING NEXIN-24"/>
    <property type="match status" value="1"/>
</dbReference>
<dbReference type="Pfam" id="PF00787">
    <property type="entry name" value="PX"/>
    <property type="match status" value="1"/>
</dbReference>
<dbReference type="SMART" id="SM00312">
    <property type="entry name" value="PX"/>
    <property type="match status" value="1"/>
</dbReference>
<dbReference type="SUPFAM" id="SSF64268">
    <property type="entry name" value="PX domain"/>
    <property type="match status" value="1"/>
</dbReference>
<dbReference type="PROSITE" id="PS50195">
    <property type="entry name" value="PX"/>
    <property type="match status" value="1"/>
</dbReference>
<evidence type="ECO:0000250" key="1"/>
<evidence type="ECO:0000250" key="2">
    <source>
        <dbReference type="UniProtKB" id="Q9CRB0"/>
    </source>
</evidence>
<evidence type="ECO:0000255" key="3">
    <source>
        <dbReference type="PROSITE-ProRule" id="PRU00147"/>
    </source>
</evidence>
<evidence type="ECO:0000303" key="4">
    <source>
    </source>
</evidence>
<evidence type="ECO:0000303" key="5">
    <source>
    </source>
</evidence>
<evidence type="ECO:0000305" key="6"/>
<evidence type="ECO:0007744" key="7">
    <source>
    </source>
</evidence>
<evidence type="ECO:0007829" key="8">
    <source>
        <dbReference type="PDB" id="4AZ9"/>
    </source>
</evidence>
<organism>
    <name type="scientific">Homo sapiens</name>
    <name type="common">Human</name>
    <dbReference type="NCBI Taxonomy" id="9606"/>
    <lineage>
        <taxon>Eukaryota</taxon>
        <taxon>Metazoa</taxon>
        <taxon>Chordata</taxon>
        <taxon>Craniata</taxon>
        <taxon>Vertebrata</taxon>
        <taxon>Euteleostomi</taxon>
        <taxon>Mammalia</taxon>
        <taxon>Eutheria</taxon>
        <taxon>Euarchontoglires</taxon>
        <taxon>Primates</taxon>
        <taxon>Haplorrhini</taxon>
        <taxon>Catarrhini</taxon>
        <taxon>Hominidae</taxon>
        <taxon>Homo</taxon>
    </lineage>
</organism>